<organism>
    <name type="scientific">Homo sapiens</name>
    <name type="common">Human</name>
    <dbReference type="NCBI Taxonomy" id="9606"/>
    <lineage>
        <taxon>Eukaryota</taxon>
        <taxon>Metazoa</taxon>
        <taxon>Chordata</taxon>
        <taxon>Craniata</taxon>
        <taxon>Vertebrata</taxon>
        <taxon>Euteleostomi</taxon>
        <taxon>Mammalia</taxon>
        <taxon>Eutheria</taxon>
        <taxon>Euarchontoglires</taxon>
        <taxon>Primates</taxon>
        <taxon>Haplorrhini</taxon>
        <taxon>Catarrhini</taxon>
        <taxon>Hominidae</taxon>
        <taxon>Homo</taxon>
    </lineage>
</organism>
<name>SIR7_HUMAN</name>
<gene>
    <name evidence="35 40" type="primary">SIRT7</name>
    <name type="synonym">SIR2L7</name>
</gene>
<reference key="1">
    <citation type="journal article" date="2000" name="Biochem. Biophys. Res. Commun.">
        <title>Phylogenetic classification of prokaryotic and eukaryotic Sir-2 like proteins.</title>
        <authorList>
            <person name="Frye R.A."/>
        </authorList>
    </citation>
    <scope>NUCLEOTIDE SEQUENCE [MRNA] (ISOFORM 1)</scope>
    <source>
        <tissue>Spleen</tissue>
    </source>
</reference>
<reference key="2">
    <citation type="journal article" date="2004" name="Nat. Genet.">
        <title>Complete sequencing and characterization of 21,243 full-length human cDNAs.</title>
        <authorList>
            <person name="Ota T."/>
            <person name="Suzuki Y."/>
            <person name="Nishikawa T."/>
            <person name="Otsuki T."/>
            <person name="Sugiyama T."/>
            <person name="Irie R."/>
            <person name="Wakamatsu A."/>
            <person name="Hayashi K."/>
            <person name="Sato H."/>
            <person name="Nagai K."/>
            <person name="Kimura K."/>
            <person name="Makita H."/>
            <person name="Sekine M."/>
            <person name="Obayashi M."/>
            <person name="Nishi T."/>
            <person name="Shibahara T."/>
            <person name="Tanaka T."/>
            <person name="Ishii S."/>
            <person name="Yamamoto J."/>
            <person name="Saito K."/>
            <person name="Kawai Y."/>
            <person name="Isono Y."/>
            <person name="Nakamura Y."/>
            <person name="Nagahari K."/>
            <person name="Murakami K."/>
            <person name="Yasuda T."/>
            <person name="Iwayanagi T."/>
            <person name="Wagatsuma M."/>
            <person name="Shiratori A."/>
            <person name="Sudo H."/>
            <person name="Hosoiri T."/>
            <person name="Kaku Y."/>
            <person name="Kodaira H."/>
            <person name="Kondo H."/>
            <person name="Sugawara M."/>
            <person name="Takahashi M."/>
            <person name="Kanda K."/>
            <person name="Yokoi T."/>
            <person name="Furuya T."/>
            <person name="Kikkawa E."/>
            <person name="Omura Y."/>
            <person name="Abe K."/>
            <person name="Kamihara K."/>
            <person name="Katsuta N."/>
            <person name="Sato K."/>
            <person name="Tanikawa M."/>
            <person name="Yamazaki M."/>
            <person name="Ninomiya K."/>
            <person name="Ishibashi T."/>
            <person name="Yamashita H."/>
            <person name="Murakawa K."/>
            <person name="Fujimori K."/>
            <person name="Tanai H."/>
            <person name="Kimata M."/>
            <person name="Watanabe M."/>
            <person name="Hiraoka S."/>
            <person name="Chiba Y."/>
            <person name="Ishida S."/>
            <person name="Ono Y."/>
            <person name="Takiguchi S."/>
            <person name="Watanabe S."/>
            <person name="Yosida M."/>
            <person name="Hotuta T."/>
            <person name="Kusano J."/>
            <person name="Kanehori K."/>
            <person name="Takahashi-Fujii A."/>
            <person name="Hara H."/>
            <person name="Tanase T.-O."/>
            <person name="Nomura Y."/>
            <person name="Togiya S."/>
            <person name="Komai F."/>
            <person name="Hara R."/>
            <person name="Takeuchi K."/>
            <person name="Arita M."/>
            <person name="Imose N."/>
            <person name="Musashino K."/>
            <person name="Yuuki H."/>
            <person name="Oshima A."/>
            <person name="Sasaki N."/>
            <person name="Aotsuka S."/>
            <person name="Yoshikawa Y."/>
            <person name="Matsunawa H."/>
            <person name="Ichihara T."/>
            <person name="Shiohata N."/>
            <person name="Sano S."/>
            <person name="Moriya S."/>
            <person name="Momiyama H."/>
            <person name="Satoh N."/>
            <person name="Takami S."/>
            <person name="Terashima Y."/>
            <person name="Suzuki O."/>
            <person name="Nakagawa S."/>
            <person name="Senoh A."/>
            <person name="Mizoguchi H."/>
            <person name="Goto Y."/>
            <person name="Shimizu F."/>
            <person name="Wakebe H."/>
            <person name="Hishigaki H."/>
            <person name="Watanabe T."/>
            <person name="Sugiyama A."/>
            <person name="Takemoto M."/>
            <person name="Kawakami B."/>
            <person name="Yamazaki M."/>
            <person name="Watanabe K."/>
            <person name="Kumagai A."/>
            <person name="Itakura S."/>
            <person name="Fukuzumi Y."/>
            <person name="Fujimori Y."/>
            <person name="Komiyama M."/>
            <person name="Tashiro H."/>
            <person name="Tanigami A."/>
            <person name="Fujiwara T."/>
            <person name="Ono T."/>
            <person name="Yamada K."/>
            <person name="Fujii Y."/>
            <person name="Ozaki K."/>
            <person name="Hirao M."/>
            <person name="Ohmori Y."/>
            <person name="Kawabata A."/>
            <person name="Hikiji T."/>
            <person name="Kobatake N."/>
            <person name="Inagaki H."/>
            <person name="Ikema Y."/>
            <person name="Okamoto S."/>
            <person name="Okitani R."/>
            <person name="Kawakami T."/>
            <person name="Noguchi S."/>
            <person name="Itoh T."/>
            <person name="Shigeta K."/>
            <person name="Senba T."/>
            <person name="Matsumura K."/>
            <person name="Nakajima Y."/>
            <person name="Mizuno T."/>
            <person name="Morinaga M."/>
            <person name="Sasaki M."/>
            <person name="Togashi T."/>
            <person name="Oyama M."/>
            <person name="Hata H."/>
            <person name="Watanabe M."/>
            <person name="Komatsu T."/>
            <person name="Mizushima-Sugano J."/>
            <person name="Satoh T."/>
            <person name="Shirai Y."/>
            <person name="Takahashi Y."/>
            <person name="Nakagawa K."/>
            <person name="Okumura K."/>
            <person name="Nagase T."/>
            <person name="Nomura N."/>
            <person name="Kikuchi H."/>
            <person name="Masuho Y."/>
            <person name="Yamashita R."/>
            <person name="Nakai K."/>
            <person name="Yada T."/>
            <person name="Nakamura Y."/>
            <person name="Ohara O."/>
            <person name="Isogai T."/>
            <person name="Sugano S."/>
        </authorList>
    </citation>
    <scope>NUCLEOTIDE SEQUENCE [LARGE SCALE MRNA] (ISOFORMS 1; 2 AND 3)</scope>
    <source>
        <tissue>Cerebellum</tissue>
        <tissue>Colon</tissue>
        <tissue>Placenta</tissue>
    </source>
</reference>
<reference key="3">
    <citation type="journal article" date="2006" name="Nature">
        <title>DNA sequence of human chromosome 17 and analysis of rearrangement in the human lineage.</title>
        <authorList>
            <person name="Zody M.C."/>
            <person name="Garber M."/>
            <person name="Adams D.J."/>
            <person name="Sharpe T."/>
            <person name="Harrow J."/>
            <person name="Lupski J.R."/>
            <person name="Nicholson C."/>
            <person name="Searle S.M."/>
            <person name="Wilming L."/>
            <person name="Young S.K."/>
            <person name="Abouelleil A."/>
            <person name="Allen N.R."/>
            <person name="Bi W."/>
            <person name="Bloom T."/>
            <person name="Borowsky M.L."/>
            <person name="Bugalter B.E."/>
            <person name="Butler J."/>
            <person name="Chang J.L."/>
            <person name="Chen C.-K."/>
            <person name="Cook A."/>
            <person name="Corum B."/>
            <person name="Cuomo C.A."/>
            <person name="de Jong P.J."/>
            <person name="DeCaprio D."/>
            <person name="Dewar K."/>
            <person name="FitzGerald M."/>
            <person name="Gilbert J."/>
            <person name="Gibson R."/>
            <person name="Gnerre S."/>
            <person name="Goldstein S."/>
            <person name="Grafham D.V."/>
            <person name="Grocock R."/>
            <person name="Hafez N."/>
            <person name="Hagopian D.S."/>
            <person name="Hart E."/>
            <person name="Norman C.H."/>
            <person name="Humphray S."/>
            <person name="Jaffe D.B."/>
            <person name="Jones M."/>
            <person name="Kamal M."/>
            <person name="Khodiyar V.K."/>
            <person name="LaButti K."/>
            <person name="Laird G."/>
            <person name="Lehoczky J."/>
            <person name="Liu X."/>
            <person name="Lokyitsang T."/>
            <person name="Loveland J."/>
            <person name="Lui A."/>
            <person name="Macdonald P."/>
            <person name="Major J.E."/>
            <person name="Matthews L."/>
            <person name="Mauceli E."/>
            <person name="McCarroll S.A."/>
            <person name="Mihalev A.H."/>
            <person name="Mudge J."/>
            <person name="Nguyen C."/>
            <person name="Nicol R."/>
            <person name="O'Leary S.B."/>
            <person name="Osoegawa K."/>
            <person name="Schwartz D.C."/>
            <person name="Shaw-Smith C."/>
            <person name="Stankiewicz P."/>
            <person name="Steward C."/>
            <person name="Swarbreck D."/>
            <person name="Venkataraman V."/>
            <person name="Whittaker C.A."/>
            <person name="Yang X."/>
            <person name="Zimmer A.R."/>
            <person name="Bradley A."/>
            <person name="Hubbard T."/>
            <person name="Birren B.W."/>
            <person name="Rogers J."/>
            <person name="Lander E.S."/>
            <person name="Nusbaum C."/>
        </authorList>
    </citation>
    <scope>NUCLEOTIDE SEQUENCE [LARGE SCALE GENOMIC DNA]</scope>
</reference>
<reference key="4">
    <citation type="journal article" date="2004" name="Genome Res.">
        <title>The status, quality, and expansion of the NIH full-length cDNA project: the Mammalian Gene Collection (MGC).</title>
        <authorList>
            <consortium name="The MGC Project Team"/>
        </authorList>
    </citation>
    <scope>NUCLEOTIDE SEQUENCE [LARGE SCALE MRNA] (ISOFORM 1)</scope>
    <source>
        <tissue>Liver</tissue>
        <tissue>Lymph</tissue>
    </source>
</reference>
<reference key="5">
    <citation type="journal article" date="2007" name="BMC Genomics">
        <title>The full-ORF clone resource of the German cDNA consortium.</title>
        <authorList>
            <person name="Bechtel S."/>
            <person name="Rosenfelder H."/>
            <person name="Duda A."/>
            <person name="Schmidt C.P."/>
            <person name="Ernst U."/>
            <person name="Wellenreuther R."/>
            <person name="Mehrle A."/>
            <person name="Schuster C."/>
            <person name="Bahr A."/>
            <person name="Bloecker H."/>
            <person name="Heubner D."/>
            <person name="Hoerlein A."/>
            <person name="Michel G."/>
            <person name="Wedler H."/>
            <person name="Koehrer K."/>
            <person name="Ottenwaelder B."/>
            <person name="Poustka A."/>
            <person name="Wiemann S."/>
            <person name="Schupp I."/>
        </authorList>
    </citation>
    <scope>NUCLEOTIDE SEQUENCE [LARGE SCALE MRNA] OF 128-400 (ISOFORM 1)</scope>
    <source>
        <tissue>Testis</tissue>
    </source>
</reference>
<reference key="6">
    <citation type="journal article" date="2002" name="Br. J. Cancer">
        <title>Isolation of a SIR-like gene, SIR-T8, that is overexpressed in thyroid carcinoma cell lines and tissues.</title>
        <authorList>
            <person name="de Nigris F."/>
            <person name="Cerutti J."/>
            <person name="Morelli C."/>
            <person name="Califano D."/>
            <person name="Chiariotti L."/>
            <person name="Viglietto G."/>
            <person name="Santelli G."/>
            <person name="Fusco A."/>
        </authorList>
    </citation>
    <scope>SUBCELLULAR LOCATION</scope>
</reference>
<reference key="7">
    <citation type="journal article" date="2002" name="Br. J. Cancer">
        <authorList>
            <person name="De Nigris F."/>
            <person name="Cerutti J."/>
            <person name="Morelli C."/>
            <person name="Califano D."/>
            <person name="Chiariotti L."/>
            <person name="Viglietto G."/>
            <person name="Santelli G."/>
            <person name="Fusco A."/>
        </authorList>
    </citation>
    <scope>ERRATUM OF PUBMED:11953824</scope>
</reference>
<reference key="8">
    <citation type="journal article" date="2002" name="Br. J. Cancer">
        <title>'SIRT8' expressed in thyroid cancer is actually SIRT7.</title>
        <authorList>
            <person name="Frye R.A."/>
        </authorList>
    </citation>
    <scope>SHOWS THAT SIR-T8 IS SIRT7</scope>
</reference>
<reference key="9">
    <citation type="journal article" date="2005" name="Mol. Biol. Cell">
        <title>Evolutionarily conserved and nonconserved cellular localizations and functions of human SIRT proteins.</title>
        <authorList>
            <person name="Michishita E."/>
            <person name="Park J.Y."/>
            <person name="Burneskis J.M."/>
            <person name="Barrett J.C."/>
            <person name="Horikawa I."/>
        </authorList>
    </citation>
    <scope>SUBCELLULAR LOCATION</scope>
</reference>
<reference key="10">
    <citation type="journal article" date="2006" name="Genes Dev.">
        <title>Mammalian Sir2 homolog SIRT7 is an activator of RNA polymerase I transcription.</title>
        <authorList>
            <person name="Ford E."/>
            <person name="Voit R."/>
            <person name="Liszt G."/>
            <person name="Magin C."/>
            <person name="Grummt I."/>
            <person name="Guarente L."/>
        </authorList>
    </citation>
    <scope>FUNCTION</scope>
    <scope>IDENTIFICATION IN A RNA POLYMERASE I COMPLEX</scope>
    <scope>ACTIVE SITE</scope>
    <scope>INTERACTION WITH HISTONE H2A AND/OR HISTONE H2B</scope>
    <scope>MUTAGENESIS OF SER-111 AND HIS-187</scope>
    <scope>SUBCELLULAR LOCATION</scope>
</reference>
<reference key="11">
    <citation type="journal article" date="2009" name="J. Cell Sci.">
        <title>Involvement of SIRT7 in resumption of rDNA transcription at the exit from mitosis.</title>
        <authorList>
            <person name="Grob A."/>
            <person name="Roussel P."/>
            <person name="Wright J.E."/>
            <person name="McStay B."/>
            <person name="Hernandez-Verdun D."/>
            <person name="Sirri V."/>
        </authorList>
    </citation>
    <scope>FUNCTION</scope>
    <scope>INTERACTION WITH UBTF</scope>
    <scope>PHOSPHORYLATION</scope>
    <scope>SUBCELLULAR LOCATION</scope>
</reference>
<reference key="12">
    <citation type="journal article" date="2012" name="Mol. Cell. Proteomics">
        <title>Functional proteomics establishes the interaction of SIRT7 with chromatin remodeling complexes and expands its role in regulation of RNA polymerase I transcription.</title>
        <authorList>
            <person name="Tsai Y.C."/>
            <person name="Greco T.M."/>
            <person name="Boonmee A."/>
            <person name="Miteva Y."/>
            <person name="Cristea I.M."/>
        </authorList>
    </citation>
    <scope>SUBCELLULAR LOCATION</scope>
    <scope>INTERACTION WITH MYBBP1A; SMARCA5 AND BAZ1B</scope>
    <scope>MUTAGENESIS OF SER-111</scope>
</reference>
<reference key="13">
    <citation type="journal article" date="2012" name="Nature">
        <title>SIRT7 links H3K18 deacetylation to maintenance of oncogenic transformation.</title>
        <authorList>
            <person name="Barber M.F."/>
            <person name="Michishita-Kioi E."/>
            <person name="Xi Y."/>
            <person name="Tasselli L."/>
            <person name="Kioi M."/>
            <person name="Moqtaderi Z."/>
            <person name="Tennen R.I."/>
            <person name="Paredes S."/>
            <person name="Young N.L."/>
            <person name="Chen K."/>
            <person name="Struhl K."/>
            <person name="Garcia B.A."/>
            <person name="Gozani O."/>
            <person name="Li W."/>
            <person name="Chua K.F."/>
        </authorList>
    </citation>
    <scope>FUNCTION</scope>
    <scope>CATALYTIC ACTIVITY</scope>
    <scope>ACTIVE SITE</scope>
    <scope>SUBCELLULAR LOCATION</scope>
    <scope>INTERACTION WITH ELK4</scope>
    <scope>MUTAGENESIS OF HIS-187</scope>
</reference>
<reference key="14">
    <citation type="journal article" date="2013" name="Mol. Cell">
        <title>Repression of RNA polymerase I upon stress is caused by inhibition of RNA-dependent deacetylation of PAF53 by SIRT7.</title>
        <authorList>
            <person name="Chen S."/>
            <person name="Seiler J."/>
            <person name="Santiago-Reichelt M."/>
            <person name="Felbel K."/>
            <person name="Grummt I."/>
            <person name="Voit R."/>
        </authorList>
    </citation>
    <scope>FUNCTION</scope>
    <scope>CATALYTIC ACTIVITY</scope>
    <scope>SUBCELLULAR LOCATION</scope>
</reference>
<reference key="15">
    <citation type="journal article" date="2014" name="Mol. Cell. Proteomics">
        <title>Immunoaffinity enrichment and mass spectrometry analysis of protein methylation.</title>
        <authorList>
            <person name="Guo A."/>
            <person name="Gu H."/>
            <person name="Zhou J."/>
            <person name="Mulhern D."/>
            <person name="Wang Y."/>
            <person name="Lee K.A."/>
            <person name="Yang V."/>
            <person name="Aguiar M."/>
            <person name="Kornhauser J."/>
            <person name="Jia X."/>
            <person name="Ren J."/>
            <person name="Beausoleil S.A."/>
            <person name="Silva J.C."/>
            <person name="Vemulapalli V."/>
            <person name="Bedford M.T."/>
            <person name="Comb M.J."/>
        </authorList>
    </citation>
    <scope>METHYLATION [LARGE SCALE ANALYSIS] AT ARG-388</scope>
    <scope>IDENTIFICATION BY MASS SPECTROMETRY [LARGE SCALE ANALYSIS]</scope>
    <source>
        <tissue>Colon carcinoma</tissue>
    </source>
</reference>
<reference key="16">
    <citation type="journal article" date="2016" name="ACS Chem. Biol.">
        <title>SIRT7 is activated by DNA and deacetylates histone H3 in the chromatin context.</title>
        <authorList>
            <person name="Tong Z."/>
            <person name="Wang Y."/>
            <person name="Zhang X."/>
            <person name="Kim D.D."/>
            <person name="Sadhukhan S."/>
            <person name="Hao Q."/>
            <person name="Lin H."/>
        </authorList>
    </citation>
    <scope>FUNCTION</scope>
    <scope>CATALYTIC ACTIVITY</scope>
    <scope>ACTIVITY REGULATION</scope>
</reference>
<reference key="17">
    <citation type="journal article" date="2016" name="Nat. Commun.">
        <title>SIRT7-dependent deacetylation of the U3-55k protein controls pre-rRNA processing.</title>
        <authorList>
            <person name="Chen S."/>
            <person name="Blank M.F."/>
            <person name="Iyer A."/>
            <person name="Huang B."/>
            <person name="Wang L."/>
            <person name="Grummt I."/>
            <person name="Voit R."/>
        </authorList>
    </citation>
    <scope>FUNCTION</scope>
    <scope>CATALYTIC ACTIVITY</scope>
    <scope>ACTIVE SITE</scope>
    <scope>MUTAGENESIS OF HIS-187</scope>
</reference>
<reference key="18">
    <citation type="journal article" date="2016" name="Nat. Commun.">
        <title>SIRT7 is a histone desuccinylase that functionally links to chromatin compaction and genome stability.</title>
        <authorList>
            <person name="Li L."/>
            <person name="Shi L."/>
            <person name="Yang S."/>
            <person name="Yan R."/>
            <person name="Zhang D."/>
            <person name="Yang J."/>
            <person name="He L."/>
            <person name="Li W."/>
            <person name="Yi X."/>
            <person name="Sun L."/>
            <person name="Liang J."/>
            <person name="Cheng Z."/>
            <person name="Shi L."/>
            <person name="Shang Y."/>
            <person name="Yu W."/>
        </authorList>
    </citation>
    <scope>FUNCTION</scope>
    <scope>CATALYTIC ACTIVITY</scope>
    <scope>SUBCELLULAR LOCATION</scope>
    <scope>MUTAGENESIS OF SER-111 AND HIS-187</scope>
</reference>
<reference key="19">
    <citation type="journal article" date="2017" name="ACS Chem. Biol.">
        <title>SIRT7 is an RNA-activated protein lysine deacylase.</title>
        <authorList>
            <person name="Tong Z."/>
            <person name="Wang M."/>
            <person name="Wang Y."/>
            <person name="Kim D.D."/>
            <person name="Grenier J.K."/>
            <person name="Cao J."/>
            <person name="Sadhukhan S."/>
            <person name="Hao Q."/>
            <person name="Lin H."/>
        </authorList>
    </citation>
    <scope>FUNCTION</scope>
    <scope>ACTIVITY REGULATION</scope>
</reference>
<reference key="20">
    <citation type="journal article" date="2017" name="Cell Rep.">
        <title>Regulation of serine-threonine kinase Akt activation by NAD+-dependent deacetylase SIRT7.</title>
        <authorList>
            <person name="Yu J."/>
            <person name="Qin B."/>
            <person name="Wu F."/>
            <person name="Qin S."/>
            <person name="Nowsheen S."/>
            <person name="Shan S."/>
            <person name="Zayas J."/>
            <person name="Pei H."/>
            <person name="Lou Z."/>
            <person name="Wang L."/>
        </authorList>
    </citation>
    <scope>FUNCTION</scope>
    <scope>CATALYTIC ACTIVITY</scope>
</reference>
<reference key="21">
    <citation type="journal article" date="2017" name="FEBS J.">
        <title>SIRT7 deacetylates DDB1 and suppresses the activity of the CRL4 E3 ligase complexes.</title>
        <authorList>
            <person name="Mo Y."/>
            <person name="Lin R."/>
            <person name="Liu P."/>
            <person name="Tan M."/>
            <person name="Xiong Y."/>
            <person name="Guan K.L."/>
            <person name="Yuan H.X."/>
        </authorList>
    </citation>
    <scope>FUNCTION</scope>
    <scope>CATALYTIC ACTIVITY</scope>
    <scope>SUBCELLULAR LOCATION</scope>
    <scope>MUTAGENESIS OF SER-111</scope>
</reference>
<reference key="22">
    <citation type="journal article" date="2017" name="Genes Dev.">
        <title>SIRT7 and the DEAD-box helicase DDX21 cooperate to resolve genomic R loops and safeguard genome stability.</title>
        <authorList>
            <person name="Song C."/>
            <person name="Hotz-Wagenblatt A."/>
            <person name="Voit R."/>
            <person name="Grummt I."/>
        </authorList>
    </citation>
    <scope>FUNCTION</scope>
    <scope>CATALYTIC ACTIVITY</scope>
    <scope>SUBCELLULAR LOCATION</scope>
</reference>
<reference key="23">
    <citation type="journal article" date="2017" name="J. Biol. Chem.">
        <title>Ubiquitin-specific peptidase 7 (USP7)-mediated deubiquitination of the histone deacetylase SIRT7 regulates gluconeogenesis.</title>
        <authorList>
            <person name="Jiang L."/>
            <person name="Xiong J."/>
            <person name="Zhan J."/>
            <person name="Yuan F."/>
            <person name="Tang M."/>
            <person name="Zhang C."/>
            <person name="Cao Z."/>
            <person name="Chen Y."/>
            <person name="Lu X."/>
            <person name="Li Y."/>
            <person name="Wang H."/>
            <person name="Wang L."/>
            <person name="Wang J."/>
            <person name="Zhu W.G."/>
            <person name="Wang H."/>
        </authorList>
    </citation>
    <scope>UBIQUITINATION</scope>
    <scope>DEUBIQUITINATION BY USP7</scope>
    <scope>ACTIVITY REGULATION</scope>
</reference>
<reference key="24">
    <citation type="journal article" date="2017" name="Nucleic Acids Res.">
        <title>SIRT7-dependent deacetylation of CDK9 activates RNA polymerase II transcription.</title>
        <authorList>
            <person name="Blank M.F."/>
            <person name="Chen S."/>
            <person name="Poetz F."/>
            <person name="Schnoelzer M."/>
            <person name="Voit R."/>
            <person name="Grummt I."/>
        </authorList>
    </citation>
    <scope>FUNCTION</scope>
    <scope>CATALYTIC ACTIVITY</scope>
    <scope>SUBCELLULAR LOCATION</scope>
</reference>
<reference key="25">
    <citation type="journal article" date="2018" name="Cell Rep.">
        <title>SIRT7-dependent deacetylation of fibrillarin controls histone H2A methylation and rRNA synthesis during the cell cycle.</title>
        <authorList>
            <person name="Iyer-Bierhoff A."/>
            <person name="Krogh N."/>
            <person name="Tessarz P."/>
            <person name="Ruppert T."/>
            <person name="Nielsen H."/>
            <person name="Grummt I."/>
        </authorList>
    </citation>
    <scope>FUNCTION</scope>
    <scope>CATALYTIC ACTIVITY</scope>
</reference>
<reference key="26">
    <citation type="journal article" date="2018" name="EMBO Rep.">
        <title>Arginine methylation of SIRT7 couples glucose sensing with mitochondria biogenesis.</title>
        <authorList>
            <person name="Yan W.W."/>
            <person name="Liang Y.L."/>
            <person name="Zhang Q.X."/>
            <person name="Wang D."/>
            <person name="Lei M.Z."/>
            <person name="Qu J."/>
            <person name="He X.H."/>
            <person name="Lei Q.Y."/>
            <person name="Wang Y.P."/>
        </authorList>
    </citation>
    <scope>FUNCTION</scope>
    <scope>CATALYTIC ACTIVITY</scope>
    <scope>ACTIVITY REGULATION</scope>
    <scope>SUBCELLULAR LOCATION</scope>
    <scope>METHYLATION AT ARG-388</scope>
    <scope>MUTAGENESIS OF ARG-388</scope>
</reference>
<reference key="27">
    <citation type="journal article" date="2018" name="J. Biol. Chem.">
        <title>The epigenetic regulator SIRT7 guards against mammalian cellular senescence induced by ribosomal DNA instability.</title>
        <authorList>
            <person name="Paredes S."/>
            <person name="Angulo-Ibanez M."/>
            <person name="Tasselli L."/>
            <person name="Carlson S.M."/>
            <person name="Zheng W."/>
            <person name="Li T.M."/>
            <person name="Chua K.F."/>
        </authorList>
    </citation>
    <scope>FUNCTION</scope>
</reference>
<reference key="28">
    <citation type="journal article" date="2019" name="Biochim. Biophys. Acta">
        <title>SIRT7 regulates the nuclear export of NF-kappaB p65 by deacetylating Ran.</title>
        <authorList>
            <person name="Sobuz S.U."/>
            <person name="Sato Y."/>
            <person name="Yoshizawa T."/>
            <person name="Karim F."/>
            <person name="Ono K."/>
            <person name="Sawa T."/>
            <person name="Miyamoto Y."/>
            <person name="Oka M."/>
            <person name="Yamagata K."/>
        </authorList>
    </citation>
    <scope>FUNCTION</scope>
    <scope>SUBCELLULAR LOCATION</scope>
</reference>
<reference key="29">
    <citation type="journal article" date="2019" name="J. Am. Chem. Soc.">
        <title>A click chemistry approach reveals the chromatin-dependent histone H3K36 deacylase nature of SIRT7.</title>
        <authorList>
            <person name="Wang W.W."/>
            <person name="Angulo-Ibanez M."/>
            <person name="Lyu J."/>
            <person name="Kurra Y."/>
            <person name="Tong Z."/>
            <person name="Wu B."/>
            <person name="Zhang L."/>
            <person name="Sharma V."/>
            <person name="Zhou J."/>
            <person name="Lin H."/>
            <person name="Gao Y.Q."/>
            <person name="Li W."/>
            <person name="Chua K.F."/>
            <person name="Liu W.R."/>
        </authorList>
    </citation>
    <scope>FUNCTION</scope>
    <scope>CATALYTIC ACTIVITY</scope>
</reference>
<reference key="30">
    <citation type="journal article" date="2019" name="Mol. Cell">
        <title>Glutarylation of histone H4 lysine 91 regulates chromatin dynamics.</title>
        <authorList>
            <person name="Bao X."/>
            <person name="Liu Z."/>
            <person name="Zhang W."/>
            <person name="Gladysz K."/>
            <person name="Fung Y.M.E."/>
            <person name="Tian G."/>
            <person name="Xiong Y."/>
            <person name="Wong J.W.H."/>
            <person name="Yuen K.W.Y."/>
            <person name="Li X.D."/>
        </authorList>
    </citation>
    <scope>FUNCTION</scope>
    <scope>CATALYTIC ACTIVITY</scope>
</reference>
<reference key="31">
    <citation type="journal article" date="2019" name="Nucleic Acids Res.">
        <title>SIRT7 mediates L1 elements transcriptional repression and their association with the nuclear lamina.</title>
        <authorList>
            <person name="Vazquez B.N."/>
            <person name="Thackray J.K."/>
            <person name="Simonet N.G."/>
            <person name="Chahar S."/>
            <person name="Kane-Goldsmith N."/>
            <person name="Newkirk S.J."/>
            <person name="Lee S."/>
            <person name="Xing J."/>
            <person name="Verzi M.P."/>
            <person name="An W."/>
            <person name="Vaquero A."/>
            <person name="Tischfield J.A."/>
            <person name="Serrano L."/>
        </authorList>
    </citation>
    <scope>FUNCTION</scope>
    <scope>SUBCELLULAR LOCATION</scope>
</reference>
<reference key="32">
    <citation type="journal article" date="2022" name="ACS Chem. Biol.">
        <title>Potent Activation of NAD+-Dependent Deacetylase Sirt7 by Nucleosome Binding.</title>
        <authorList>
            <person name="Kuznetsov V.I."/>
            <person name="Liu W.H."/>
            <person name="Klein M.A."/>
            <person name="Denu J.M."/>
        </authorList>
    </citation>
    <scope>FUNCTION</scope>
    <scope>CATALYTIC ACTIVITY</scope>
    <scope>BIOPHYSICOCHEMICAL PROPERTIES</scope>
    <scope>ACTIVITY REGULATION</scope>
</reference>
<reference key="33">
    <citation type="journal article" date="2019" name="Sci. Adv.">
        <title>SIRT7-mediated ATM deacetylation is essential for its deactivation and DNA damage repair.</title>
        <authorList>
            <person name="Tang M."/>
            <person name="Li Z."/>
            <person name="Zhang C."/>
            <person name="Lu X."/>
            <person name="Tu B."/>
            <person name="Cao Z."/>
            <person name="Li Y."/>
            <person name="Chen Y."/>
            <person name="Jiang L."/>
            <person name="Wang H."/>
            <person name="Wang L."/>
            <person name="Wang J."/>
            <person name="Liu B."/>
            <person name="Xu X."/>
            <person name="Wang H."/>
            <person name="Zhu W.G."/>
        </authorList>
    </citation>
    <scope>FUNCTION</scope>
    <scope>CATALYTIC ACTIVITY</scope>
    <scope>SUBCELLULAR LOCATION</scope>
    <scope>ACTIVE SITE</scope>
    <scope>MUTAGENESIS OF HIS-187</scope>
</reference>
<reference key="34">
    <citation type="journal article" date="2023" name="J. Biol. Chem.">
        <title>E3 ligase adaptor FBXO7 contributes to ubiquitination and proteasomal degradation of SIRT7 and promotes cell death in response to hydrogen peroxide.</title>
        <authorList>
            <person name="Lee S.H."/>
            <person name="Lee Y.J."/>
            <person name="Jung S."/>
            <person name="Chung K.C."/>
        </authorList>
    </citation>
    <scope>UBIQUITINATION BY FBXO7</scope>
</reference>
<reference evidence="41" key="35">
    <citation type="journal article" date="2016" name="Proteins">
        <title>Crystal structure of the N-terminal domain of human SIRT7 reveals a three-helical domain architecture.</title>
        <authorList>
            <person name="Priyanka A."/>
            <person name="Solanki V."/>
            <person name="Parkesh R."/>
            <person name="Thakur K.G."/>
        </authorList>
    </citation>
    <scope>X-RAY CRYSTALLOGRAPHY (2.33 ANGSTROMS) OF 5-73</scope>
</reference>
<proteinExistence type="evidence at protein level"/>
<sequence>MAAGGLSRSERKAAERVRRLREEQQRERLRQVSRILRKAAAERSAEEGRLLAESADLVTELQGRSRRREGLKRRQEEVCDDPEELRGKVRELASAVRNAKYLVVYTGAGISTAASIPDYRGPNGVWTLLQKGRSVSAADLSEAEPTLTHMSITRLHEQKLVQHVVSQNCDGLHLRSGLPRTAISELHGNMYIEVCTSCVPNREYVRVFDVTERTALHRHQTGRTCHKCGTQLRDTIVHFGERGTLGQPLNWEAATEAASRADTILCLGSSLKVLKKYPRLWCMTKPPSRRPKLYIVNLQWTPKDDWAALKLHGKCDDVMRLLMAELGLEIPAYSRWQDPIFSLATPLRAGEEGSHSRKSLCRSREEAPPGDRGAPLSSAPILGGWFGRGCTKRTKRKKVT</sequence>
<keyword id="KW-0002">3D-structure</keyword>
<keyword id="KW-0025">Alternative splicing</keyword>
<keyword id="KW-0156">Chromatin regulator</keyword>
<keyword id="KW-0158">Chromosome</keyword>
<keyword id="KW-0963">Cytoplasm</keyword>
<keyword id="KW-0227">DNA damage</keyword>
<keyword id="KW-0234">DNA repair</keyword>
<keyword id="KW-0378">Hydrolase</keyword>
<keyword id="KW-0479">Metal-binding</keyword>
<keyword id="KW-0488">Methylation</keyword>
<keyword id="KW-0520">NAD</keyword>
<keyword id="KW-0539">Nucleus</keyword>
<keyword id="KW-0597">Phosphoprotein</keyword>
<keyword id="KW-1267">Proteomics identification</keyword>
<keyword id="KW-1185">Reference proteome</keyword>
<keyword id="KW-0678">Repressor</keyword>
<keyword id="KW-0804">Transcription</keyword>
<keyword id="KW-0805">Transcription regulation</keyword>
<keyword id="KW-0808">Transferase</keyword>
<keyword id="KW-0832">Ubl conjugation</keyword>
<keyword id="KW-0862">Zinc</keyword>
<comment type="function">
    <text evidence="1 7 8 10 11 12 13 14 15 16 17 19 20 21 22 23 24 25 26 27 28 29">NAD-dependent protein-lysine deacylase that can act both as a deacetylase or deacylase (desuccinylase, depropionylase, deglutarylase and dedecanoylase), depending on the context (PubMed:22722849, PubMed:26907567, PubMed:30653310, PubMed:31542297, PubMed:35939806). Specifically mediates deacetylation of histone H3 at 'Lys-18' (H3K18Ac) (PubMed:22722849, PubMed:30420520, PubMed:35939806). In contrast to other histone deacetylases, displays strong preference for a specific histone mark, H3K18Ac, directly linked to control of gene expression (PubMed:22722849, PubMed:30653310). H3K18Ac is mainly present around the transcription start site of genes and has been linked to activation of nuclear hormone receptors; SIRT7 thereby acts as a transcription repressor (PubMed:22722849). Moreover, H3K18 hypoacetylation has been reported as a marker of malignancy in various cancers and seems to maintain the transformed phenotype of cancer cells (PubMed:22722849). Also able to mediate deacetylation of histone H3 at 'Lys-36' (H3K36Ac) in the context of nucleosomes (PubMed:30653310). Also mediates deacetylation of non-histone proteins, such as ATM, CDK9, DDX21, DDB1, FBL, FKBP5/FKBP51, GABPB1, RAN, RRP9/U3-55K and POLR1E/PAF53 (PubMed:24207024, PubMed:26867678, PubMed:28147277, PubMed:28426094, PubMed:28790157, PubMed:28886238, PubMed:30540930, PubMed:30944854, PubMed:31075303). Enriched in nucleolus where it stimulates transcription activity of the RNA polymerase I complex (PubMed:16618798, PubMed:19174463, PubMed:24207024). Acts by mediating the deacetylation of the RNA polymerase I subunit POLR1E/PAF53, thereby promoting the association of RNA polymerase I with the rDNA promoter region and coding region (PubMed:16618798, PubMed:19174463, PubMed:24207024). In response to metabolic stress, SIRT7 is released from nucleoli leading to hyperacetylation of POLR1E/PAF53 and decreased RNA polymerase I transcription (PubMed:24207024). Required to restore the transcription of ribosomal RNA (rRNA) at the exit from mitosis (PubMed:19174463). Promotes pre-ribosomal RNA (pre-rRNA) cleavage at the 5'-terminal processing site by mediating deacetylation of RRP9/U3-55K, a core subunit of the U3 snoRNP complex (PubMed:26867678). Mediates 'Lys-37' deacetylation of Ran, thereby regulating the nuclear export of NF-kappa-B subunit RELA/p65 (PubMed:31075303). Acts as a regulator of DNA damage repair by mediating deacetylation of ATM during the late stages of DNA damage response, promoting ATM dephosphorylation and deactivation (PubMed:30944854). Suppresses the activity of the DCX (DDB1-CUL4-X-box) E3 ubiquitin-protein ligase complexes by mediating deacetylation of DDB1, which prevents the interaction between DDB1 and CUL4 (CUL4A or CUL4B) (PubMed:28886238). Activates RNA polymerase II transcription by mediating deacetylation of CDK9, thereby promoting 'Ser-2' phosphorylation of the C-terminal domain (CTD) of RNA polymerase II (PubMed:28426094). Deacetylates FBL, promoting histone-glutamine methyltransferase activity of FBL (PubMed:30540930). Acts as a regulator of mitochondrial function by catalyzing deacetylation of GABPB1 (By similarity). Regulates Akt/AKT1 activity by mediating deacetylation of FKBP5/FKBP51 (PubMed:28147277). Required to prevent R-loop-associated DNA damage and transcription-associated genomic instability by mediating deacetylation and subsequent activation of DDX21, thereby overcoming R-loop-mediated stalling of RNA polymerases (PubMed:28790157). In addition to protein deacetylase activity, also acts as a protein-lysine deacylase (PubMed:27436229, PubMed:27997115, PubMed:31542297). Acts as a protein depropionylase by mediating depropionylation of Osterix (SP7), thereby regulating bone formation by osteoblasts (By similarity). Acts as a histone deglutarylase by mediating deglutarylation of histone H4 on 'Lys-91' (H4K91glu); a mark that destabilizes nucleosomes by promoting dissociation of the H2A-H2B dimers from nucleosomes (PubMed:31542297). Acts as a histone desuccinylase: in response to DNA damage, recruited to DNA double-strand breaks (DSBs) and catalyzes desuccinylation of histone H3 on 'Lys-122' (H3K122succ), thereby promoting chromatin condensation and DSB repair (PubMed:27436229). Also promotes DSB repair by promoting H3K18Ac deacetylation, regulating non-homologous end joining (NHEJ) (By similarity). Along with its role in DNA repair, required for chromosome synapsis during prophase I of female meiosis by catalyzing H3K18Ac deacetylation (By similarity). Involved in transcriptional repression of LINE-1 retrotransposon via H3K18Ac deacetylation, and promotes their association with the nuclear lamina (PubMed:31226208). Required to stabilize ribosomal DNA (rDNA) heterochromatin and prevent cellular senescence induced by rDNA instability (PubMed:29728458). Acts as a negative regulator of SIRT1 by preventing autodeacetylation of SIRT1, restricting SIRT1 deacetylase activity (By similarity).</text>
</comment>
<comment type="catalytic activity">
    <reaction evidence="3 10 11 12 13 16 17 19 20 22 23 24 25 26 29">
        <text>N(6)-acetyl-L-lysyl-[protein] + NAD(+) + H2O = 2''-O-acetyl-ADP-D-ribose + nicotinamide + L-lysyl-[protein]</text>
        <dbReference type="Rhea" id="RHEA:43636"/>
        <dbReference type="Rhea" id="RHEA-COMP:9752"/>
        <dbReference type="Rhea" id="RHEA-COMP:10731"/>
        <dbReference type="ChEBI" id="CHEBI:15377"/>
        <dbReference type="ChEBI" id="CHEBI:17154"/>
        <dbReference type="ChEBI" id="CHEBI:29969"/>
        <dbReference type="ChEBI" id="CHEBI:57540"/>
        <dbReference type="ChEBI" id="CHEBI:61930"/>
        <dbReference type="ChEBI" id="CHEBI:83767"/>
        <dbReference type="EC" id="2.3.1.286"/>
    </reaction>
    <physiologicalReaction direction="left-to-right" evidence="10 12 13 16 17 19 20 22 23 24 25 26">
        <dbReference type="Rhea" id="RHEA:43637"/>
    </physiologicalReaction>
</comment>
<comment type="catalytic activity">
    <reaction evidence="28">
        <text>N(6)-glutaryl-L-lysyl-[protein] + NAD(+) + H2O = 2''-O-glutaryl-ADP-D-ribose + nicotinamide + L-lysyl-[protein]</text>
        <dbReference type="Rhea" id="RHEA:47664"/>
        <dbReference type="Rhea" id="RHEA-COMP:9752"/>
        <dbReference type="Rhea" id="RHEA-COMP:11875"/>
        <dbReference type="ChEBI" id="CHEBI:15377"/>
        <dbReference type="ChEBI" id="CHEBI:17154"/>
        <dbReference type="ChEBI" id="CHEBI:29969"/>
        <dbReference type="ChEBI" id="CHEBI:57540"/>
        <dbReference type="ChEBI" id="CHEBI:87828"/>
        <dbReference type="ChEBI" id="CHEBI:87829"/>
    </reaction>
    <physiologicalReaction direction="left-to-right" evidence="28">
        <dbReference type="Rhea" id="RHEA:47665"/>
    </physiologicalReaction>
</comment>
<comment type="catalytic activity">
    <reaction evidence="14">
        <text>N(6)-succinyl-L-lysyl-[protein] + NAD(+) + H2O = 2''-O-succinyl-ADP-D-ribose + nicotinamide + L-lysyl-[protein]</text>
        <dbReference type="Rhea" id="RHEA:47668"/>
        <dbReference type="Rhea" id="RHEA-COMP:9752"/>
        <dbReference type="Rhea" id="RHEA-COMP:11877"/>
        <dbReference type="ChEBI" id="CHEBI:15377"/>
        <dbReference type="ChEBI" id="CHEBI:17154"/>
        <dbReference type="ChEBI" id="CHEBI:29969"/>
        <dbReference type="ChEBI" id="CHEBI:57540"/>
        <dbReference type="ChEBI" id="CHEBI:87830"/>
        <dbReference type="ChEBI" id="CHEBI:87832"/>
    </reaction>
    <physiologicalReaction direction="left-to-right" evidence="14">
        <dbReference type="Rhea" id="RHEA:47669"/>
    </physiologicalReaction>
</comment>
<comment type="catalytic activity">
    <reaction evidence="1">
        <text>N(6)-propanoyl-L-lysyl-[protein] + NAD(+) + H2O = 3''-O-propanoyl-ADP-D-ribose + nicotinamide + L-lysyl-[protein]</text>
        <dbReference type="Rhea" id="RHEA:23500"/>
        <dbReference type="Rhea" id="RHEA-COMP:9752"/>
        <dbReference type="Rhea" id="RHEA-COMP:13758"/>
        <dbReference type="ChEBI" id="CHEBI:15377"/>
        <dbReference type="ChEBI" id="CHEBI:17154"/>
        <dbReference type="ChEBI" id="CHEBI:29969"/>
        <dbReference type="ChEBI" id="CHEBI:57540"/>
        <dbReference type="ChEBI" id="CHEBI:138019"/>
        <dbReference type="ChEBI" id="CHEBI:145015"/>
    </reaction>
    <physiologicalReaction direction="left-to-right" evidence="1">
        <dbReference type="Rhea" id="RHEA:23501"/>
    </physiologicalReaction>
</comment>
<comment type="catalytic activity">
    <reaction evidence="29">
        <text>N(6)-decanoyl-L-lysyl-[protein] + NAD(+) + H2O = 2''-O-decanoyl-ADP-D-ribose + nicotinamide + L-lysyl-[protein]</text>
        <dbReference type="Rhea" id="RHEA:70631"/>
        <dbReference type="Rhea" id="RHEA-COMP:9752"/>
        <dbReference type="Rhea" id="RHEA-COMP:17932"/>
        <dbReference type="ChEBI" id="CHEBI:15377"/>
        <dbReference type="ChEBI" id="CHEBI:17154"/>
        <dbReference type="ChEBI" id="CHEBI:29969"/>
        <dbReference type="ChEBI" id="CHEBI:57540"/>
        <dbReference type="ChEBI" id="CHEBI:143222"/>
        <dbReference type="ChEBI" id="CHEBI:189688"/>
    </reaction>
    <physiologicalReaction direction="left-to-right" evidence="39">
        <dbReference type="Rhea" id="RHEA:70632"/>
    </physiologicalReaction>
</comment>
<comment type="cofactor">
    <cofactor evidence="2">
        <name>Zn(2+)</name>
        <dbReference type="ChEBI" id="CHEBI:29105"/>
    </cofactor>
    <text evidence="2">Binds 1 zinc ion per subunit.</text>
</comment>
<comment type="activity regulation">
    <text evidence="13 15 18 22 29">NAD-dependent protein-lysine deacetylase and deacylase activities are activated by nucleic acids (PubMed:26907567, PubMed:27997115). Histone deacetylase activity is activated by DNA and nucleosomes (PubMed:27997115, PubMed:35939806). Protein-lysine deacylase activity is activated by RNA (PubMed:26907567). H3K18Ac histone deacetylase activity is inhibited by methylation at Arg-388 (PubMed:30420520). H3K18Ac histone deacetylase activity is inhibited by deubiquitination by USP7 (PubMed:28655758).</text>
</comment>
<comment type="biophysicochemical properties">
    <kinetics>
        <KM evidence="29">0.68 mM for synthetic histone H3K18 decanoyllysine peptide</KM>
        <KM evidence="29">0.13 mM for synthetic histone H3K18 decanoyllysine peptide (in the presence of DNA)</KM>
        <KM evidence="29">0.16 mM for synthetic histone H3K18 decanoyllysine peptide (in the presence of tRNA)</KM>
        <KM evidence="29">0.11 mM for synthetic histone H3K18 decanoyllysine peptide (in the presence of nucleosomes)</KM>
        <KM evidence="29">1.27 mM for synthetic histone H3K18 acetyllysine peptide (in the presence of DNA)</KM>
        <KM evidence="29">0.48 mM for synthetic histone H3K18 acetyllysine peptide (in the presence of tRNA)</KM>
        <KM evidence="29">0.1 mM for synthetic histone H3K18 acetyllysine peptide (in the presence of nucleosomes)</KM>
    </kinetics>
</comment>
<comment type="subunit">
    <text evidence="1 7 8 9 10">Interacts with UBTF and the RNA polymerase I complex (PubMed:16618798, PubMed:19174463). Interacts with components of the B-WICH complex, such as MYBBP1A, SMARCA5/SNF2H and BAZ1B/WSTF (PubMed:22586326). Interacts with ELK4, leading to stabilization at target promoters for H3K18Ac deacetylation (PubMed:22722849). Interacts with histone H2A and/or histone H2B (PubMed:22722849). Interacts with DNMT1 (By similarity). Interacts with SIRT1 (By similarity).</text>
</comment>
<comment type="interaction">
    <interactant intactId="EBI-716046">
        <id>Q9NRC8</id>
    </interactant>
    <interactant intactId="EBI-11277718">
        <id>P28324</id>
        <label>ELK4</label>
    </interactant>
    <organismsDiffer>false</organismsDiffer>
    <experiments>3</experiments>
</comment>
<comment type="interaction">
    <interactant intactId="EBI-716046">
        <id>Q9NRC8</id>
    </interactant>
    <interactant intactId="EBI-2547810">
        <id>Q16656</id>
        <label>NRF1</label>
    </interactant>
    <organismsDiffer>false</organismsDiffer>
    <experiments>2</experiments>
</comment>
<comment type="subcellular location">
    <subcellularLocation>
        <location evidence="6 8 11 17 19 20 22">Nucleus</location>
        <location evidence="6 8 11 17 19 20 22">Nucleolus</location>
    </subcellularLocation>
    <subcellularLocation>
        <location evidence="11 19 20 26">Nucleus</location>
        <location evidence="11 19 20 26">Nucleoplasm</location>
    </subcellularLocation>
    <subcellularLocation>
        <location evidence="14 27">Chromosome</location>
    </subcellularLocation>
    <subcellularLocation>
        <location evidence="5">Cytoplasm</location>
    </subcellularLocation>
    <text evidence="5 6 8 10 11 14 19 20 26 38">Mainly localizes in the nucleolus and nucleoplasm (PubMed:24207024, PubMed:28790157, PubMed:28886238, PubMed:31075303). Associated with rDNA promoter and transcribed region (PubMed:16079181, PubMed:19174463). Associated with nucleolar organizer regions during mitosis (PubMed:16079181, PubMed:19174463). In response to stress, released from nucleolus to nucleoplasm (PubMed:24207024). Associated with chromatin (PubMed:22722849). In response to DNA damage, recruited to DNA double-strand breaks (DSBs) sites (Probable) (PubMed:27436229). Located close to the nuclear membrane when in the cytoplasm (PubMed:11953824).</text>
</comment>
<comment type="alternative products">
    <event type="alternative splicing"/>
    <isoform>
        <id>Q9NRC8-1</id>
        <name>1</name>
        <sequence type="displayed"/>
    </isoform>
    <isoform>
        <id>Q9NRC8-2</id>
        <name>2</name>
        <sequence type="described" ref="VSP_008736 VSP_008737"/>
    </isoform>
    <isoform>
        <id>Q9NRC8-3</id>
        <name>3</name>
        <sequence type="described" ref="VSP_044396 VSP_044397"/>
    </isoform>
</comment>
<comment type="induction">
    <text evidence="5">Overexpressed in thyroid carcinoma cell lines and tissues, but not in adenomas.</text>
</comment>
<comment type="PTM">
    <text evidence="37">Phosphorylated during mitosis.</text>
</comment>
<comment type="PTM">
    <text evidence="22">Methylation at Arg-388 by PRMT6 inhibits the H3K18Ac histone deacetylase activity, promoting mitochondria biogenesis and maintaining mitochondria respiration.</text>
</comment>
<comment type="PTM">
    <text evidence="18 30">Ubiquitinated via 'Lys-63'-linked ubiquitin chains (PubMed:28655758). Deubiquitinated by USP7, inhibiting the H3K18Ac histone deacetylase activity and regulating gluconeogenesis (PubMed:28655758). Ubiquitinated by E3 ubiquitin-protein ligase complex containing FBXO7; leading to proteasomal degradation.</text>
</comment>
<comment type="similarity">
    <text evidence="36">Belongs to the sirtuin family. Class IV subfamily.</text>
</comment>
<comment type="caution">
    <text evidence="31 32 33">Was originally termed SIR-T8/SIRT8 (PubMed:11953824). This was later retracted (PubMed:12454780, PubMed:12454781).</text>
</comment>
<comment type="sequence caution" evidence="36">
    <conflict type="miscellaneous discrepancy">
        <sequence resource="EMBL-CDS" id="CAB70848"/>
    </conflict>
</comment>
<dbReference type="EC" id="2.3.1.286" evidence="3 11 12 17 20 23 26"/>
<dbReference type="EC" id="2.3.1.-" evidence="14 28"/>
<dbReference type="EMBL" id="AF233395">
    <property type="protein sequence ID" value="AAF43431.1"/>
    <property type="molecule type" value="mRNA"/>
</dbReference>
<dbReference type="EMBL" id="AK002027">
    <property type="protein sequence ID" value="BAA92044.1"/>
    <property type="molecule type" value="mRNA"/>
</dbReference>
<dbReference type="EMBL" id="AK094326">
    <property type="protein sequence ID" value="BAG52860.1"/>
    <property type="molecule type" value="mRNA"/>
</dbReference>
<dbReference type="EMBL" id="AK290265">
    <property type="protein sequence ID" value="BAF82954.1"/>
    <property type="molecule type" value="mRNA"/>
</dbReference>
<dbReference type="EMBL" id="AC145207">
    <property type="status" value="NOT_ANNOTATED_CDS"/>
    <property type="molecule type" value="Genomic_DNA"/>
</dbReference>
<dbReference type="EMBL" id="BC017305">
    <property type="protein sequence ID" value="AAH17305.1"/>
    <property type="molecule type" value="mRNA"/>
</dbReference>
<dbReference type="EMBL" id="BC101791">
    <property type="protein sequence ID" value="AAI01792.1"/>
    <property type="molecule type" value="mRNA"/>
</dbReference>
<dbReference type="EMBL" id="BC101793">
    <property type="protein sequence ID" value="AAI01794.1"/>
    <property type="molecule type" value="mRNA"/>
</dbReference>
<dbReference type="EMBL" id="AL137626">
    <property type="protein sequence ID" value="CAB70848.2"/>
    <property type="status" value="ALT_SEQ"/>
    <property type="molecule type" value="mRNA"/>
</dbReference>
<dbReference type="CCDS" id="CCDS11792.1">
    <molecule id="Q9NRC8-1"/>
</dbReference>
<dbReference type="PIR" id="T46324">
    <property type="entry name" value="T46324"/>
</dbReference>
<dbReference type="RefSeq" id="NP_057622.1">
    <molecule id="Q9NRC8-1"/>
    <property type="nucleotide sequence ID" value="NM_016538.3"/>
</dbReference>
<dbReference type="PDB" id="5IQZ">
    <property type="method" value="X-ray"/>
    <property type="resolution" value="2.33 A"/>
    <property type="chains" value="A=5-73"/>
</dbReference>
<dbReference type="PDB" id="6G0S">
    <property type="method" value="X-ray"/>
    <property type="resolution" value="1.48 A"/>
    <property type="chains" value="D=269-279"/>
</dbReference>
<dbReference type="PDB" id="9GMK">
    <property type="method" value="EM"/>
    <property type="resolution" value="3.50 A"/>
    <property type="chains" value="K=1-400"/>
</dbReference>
<dbReference type="PDB" id="9GMR">
    <property type="method" value="EM"/>
    <property type="resolution" value="2.80 A"/>
    <property type="chains" value="K=1-400"/>
</dbReference>
<dbReference type="PDBsum" id="5IQZ"/>
<dbReference type="PDBsum" id="6G0S"/>
<dbReference type="PDBsum" id="9GMK"/>
<dbReference type="PDBsum" id="9GMR"/>
<dbReference type="EMDB" id="EMD-51449"/>
<dbReference type="EMDB" id="EMD-51453"/>
<dbReference type="SASBDB" id="Q9NRC8"/>
<dbReference type="SMR" id="Q9NRC8"/>
<dbReference type="BioGRID" id="119602">
    <property type="interactions" value="746"/>
</dbReference>
<dbReference type="DIP" id="DIP-59906N"/>
<dbReference type="FunCoup" id="Q9NRC8">
    <property type="interactions" value="1299"/>
</dbReference>
<dbReference type="IntAct" id="Q9NRC8">
    <property type="interactions" value="13"/>
</dbReference>
<dbReference type="STRING" id="9606.ENSP00000329466"/>
<dbReference type="BindingDB" id="Q9NRC8"/>
<dbReference type="ChEMBL" id="CHEMBL2163184"/>
<dbReference type="GlyCosmos" id="Q9NRC8">
    <property type="glycosylation" value="2 sites, 1 glycan"/>
</dbReference>
<dbReference type="GlyGen" id="Q9NRC8">
    <property type="glycosylation" value="3 sites, 1 O-linked glycan (3 sites)"/>
</dbReference>
<dbReference type="iPTMnet" id="Q9NRC8"/>
<dbReference type="PhosphoSitePlus" id="Q9NRC8"/>
<dbReference type="BioMuta" id="SIRT7"/>
<dbReference type="DMDM" id="38258650"/>
<dbReference type="jPOST" id="Q9NRC8"/>
<dbReference type="MassIVE" id="Q9NRC8"/>
<dbReference type="PaxDb" id="9606-ENSP00000329466"/>
<dbReference type="PeptideAtlas" id="Q9NRC8"/>
<dbReference type="ProteomicsDB" id="82334">
    <molecule id="Q9NRC8-1"/>
</dbReference>
<dbReference type="ProteomicsDB" id="82335">
    <molecule id="Q9NRC8-2"/>
</dbReference>
<dbReference type="Pumba" id="Q9NRC8"/>
<dbReference type="ABCD" id="Q9NRC8">
    <property type="antibodies" value="1 sequenced antibody"/>
</dbReference>
<dbReference type="Antibodypedia" id="19848">
    <property type="antibodies" value="515 antibodies from 42 providers"/>
</dbReference>
<dbReference type="DNASU" id="51547"/>
<dbReference type="Ensembl" id="ENST00000328666.11">
    <molecule id="Q9NRC8-1"/>
    <property type="protein sequence ID" value="ENSP00000329466.6"/>
    <property type="gene ID" value="ENSG00000187531.14"/>
</dbReference>
<dbReference type="GeneID" id="51547"/>
<dbReference type="KEGG" id="hsa:51547"/>
<dbReference type="MANE-Select" id="ENST00000328666.11">
    <property type="protein sequence ID" value="ENSP00000329466.6"/>
    <property type="RefSeq nucleotide sequence ID" value="NM_016538.3"/>
    <property type="RefSeq protein sequence ID" value="NP_057622.1"/>
</dbReference>
<dbReference type="UCSC" id="uc002kcj.3">
    <molecule id="Q9NRC8-1"/>
    <property type="organism name" value="human"/>
</dbReference>
<dbReference type="AGR" id="HGNC:14935"/>
<dbReference type="CTD" id="51547"/>
<dbReference type="DisGeNET" id="51547"/>
<dbReference type="GeneCards" id="SIRT7"/>
<dbReference type="HGNC" id="HGNC:14935">
    <property type="gene designation" value="SIRT7"/>
</dbReference>
<dbReference type="HPA" id="ENSG00000187531">
    <property type="expression patterns" value="Low tissue specificity"/>
</dbReference>
<dbReference type="MIM" id="606212">
    <property type="type" value="gene"/>
</dbReference>
<dbReference type="neXtProt" id="NX_Q9NRC8"/>
<dbReference type="OpenTargets" id="ENSG00000187531"/>
<dbReference type="PharmGKB" id="PA37940"/>
<dbReference type="VEuPathDB" id="HostDB:ENSG00000187531"/>
<dbReference type="eggNOG" id="KOG1905">
    <property type="taxonomic scope" value="Eukaryota"/>
</dbReference>
<dbReference type="GeneTree" id="ENSGT00940000159703"/>
<dbReference type="HOGENOM" id="CLU_023643_6_2_1"/>
<dbReference type="InParanoid" id="Q9NRC8"/>
<dbReference type="OMA" id="SNREYCK"/>
<dbReference type="OrthoDB" id="2919105at2759"/>
<dbReference type="PAN-GO" id="Q9NRC8">
    <property type="GO annotations" value="5 GO annotations based on evolutionary models"/>
</dbReference>
<dbReference type="PhylomeDB" id="Q9NRC8"/>
<dbReference type="TreeFam" id="TF106184"/>
<dbReference type="PathwayCommons" id="Q9NRC8"/>
<dbReference type="SignaLink" id="Q9NRC8"/>
<dbReference type="SIGNOR" id="Q9NRC8"/>
<dbReference type="BioGRID-ORCS" id="51547">
    <property type="hits" value="36 hits in 1178 CRISPR screens"/>
</dbReference>
<dbReference type="CD-CODE" id="91857CE7">
    <property type="entry name" value="Nucleolus"/>
</dbReference>
<dbReference type="ChiTaRS" id="SIRT7">
    <property type="organism name" value="human"/>
</dbReference>
<dbReference type="GeneWiki" id="SIRT7"/>
<dbReference type="GenomeRNAi" id="51547"/>
<dbReference type="Pharos" id="Q9NRC8">
    <property type="development level" value="Tbio"/>
</dbReference>
<dbReference type="PRO" id="PR:Q9NRC8"/>
<dbReference type="Proteomes" id="UP000005640">
    <property type="component" value="Chromosome 17"/>
</dbReference>
<dbReference type="RNAct" id="Q9NRC8">
    <property type="molecule type" value="protein"/>
</dbReference>
<dbReference type="Bgee" id="ENSG00000187531">
    <property type="expression patterns" value="Expressed in lower esophagus mucosa and 169 other cell types or tissues"/>
</dbReference>
<dbReference type="ExpressionAtlas" id="Q9NRC8">
    <property type="expression patterns" value="baseline and differential"/>
</dbReference>
<dbReference type="GO" id="GO:0000785">
    <property type="term" value="C:chromatin"/>
    <property type="evidence" value="ECO:0000314"/>
    <property type="project" value="UniProtKB"/>
</dbReference>
<dbReference type="GO" id="GO:0005737">
    <property type="term" value="C:cytoplasm"/>
    <property type="evidence" value="ECO:0000305"/>
    <property type="project" value="UniProt"/>
</dbReference>
<dbReference type="GO" id="GO:0016607">
    <property type="term" value="C:nuclear speck"/>
    <property type="evidence" value="ECO:0000314"/>
    <property type="project" value="HPA"/>
</dbReference>
<dbReference type="GO" id="GO:0005730">
    <property type="term" value="C:nucleolus"/>
    <property type="evidence" value="ECO:0000314"/>
    <property type="project" value="UniProtKB"/>
</dbReference>
<dbReference type="GO" id="GO:0005731">
    <property type="term" value="C:nucleolus organizer region"/>
    <property type="evidence" value="ECO:0000314"/>
    <property type="project" value="UniProtKB"/>
</dbReference>
<dbReference type="GO" id="GO:0005654">
    <property type="term" value="C:nucleoplasm"/>
    <property type="evidence" value="ECO:0000314"/>
    <property type="project" value="HPA"/>
</dbReference>
<dbReference type="GO" id="GO:0005634">
    <property type="term" value="C:nucleus"/>
    <property type="evidence" value="ECO:0000314"/>
    <property type="project" value="UniProtKB"/>
</dbReference>
<dbReference type="GO" id="GO:0035861">
    <property type="term" value="C:site of double-strand break"/>
    <property type="evidence" value="ECO:0000314"/>
    <property type="project" value="UniProtKB"/>
</dbReference>
<dbReference type="GO" id="GO:0003682">
    <property type="term" value="F:chromatin binding"/>
    <property type="evidence" value="ECO:0000314"/>
    <property type="project" value="UniProtKB"/>
</dbReference>
<dbReference type="GO" id="GO:0097372">
    <property type="term" value="F:histone H3K18 deacetylase activity, NAD-dependent"/>
    <property type="evidence" value="ECO:0000314"/>
    <property type="project" value="UniProtKB"/>
</dbReference>
<dbReference type="GO" id="GO:0016787">
    <property type="term" value="F:hydrolase activity"/>
    <property type="evidence" value="ECO:0007669"/>
    <property type="project" value="UniProtKB-KW"/>
</dbReference>
<dbReference type="GO" id="GO:0046872">
    <property type="term" value="F:metal ion binding"/>
    <property type="evidence" value="ECO:0007669"/>
    <property type="project" value="UniProtKB-KW"/>
</dbReference>
<dbReference type="GO" id="GO:0070403">
    <property type="term" value="F:NAD+ binding"/>
    <property type="evidence" value="ECO:0000318"/>
    <property type="project" value="GO_Central"/>
</dbReference>
<dbReference type="GO" id="GO:0034979">
    <property type="term" value="F:NAD-dependent protein lysine deacetylase activity"/>
    <property type="evidence" value="ECO:0000314"/>
    <property type="project" value="UniProtKB"/>
</dbReference>
<dbReference type="GO" id="GO:0106231">
    <property type="term" value="F:NAD-dependent protein-lysine depropionylase activity"/>
    <property type="evidence" value="ECO:0000250"/>
    <property type="project" value="UniProtKB"/>
</dbReference>
<dbReference type="GO" id="GO:0008276">
    <property type="term" value="F:protein methyltransferase activity"/>
    <property type="evidence" value="ECO:0000314"/>
    <property type="project" value="UniProt"/>
</dbReference>
<dbReference type="GO" id="GO:0061697">
    <property type="term" value="F:protein-glutaryllysine deglutarylase activity"/>
    <property type="evidence" value="ECO:0000314"/>
    <property type="project" value="UniProtKB"/>
</dbReference>
<dbReference type="GO" id="GO:0036055">
    <property type="term" value="F:protein-succinyllysine desuccinylase activity"/>
    <property type="evidence" value="ECO:0000314"/>
    <property type="project" value="UniProtKB"/>
</dbReference>
<dbReference type="GO" id="GO:0006974">
    <property type="term" value="P:DNA damage response"/>
    <property type="evidence" value="ECO:0000314"/>
    <property type="project" value="UniProtKB"/>
</dbReference>
<dbReference type="GO" id="GO:0006281">
    <property type="term" value="P:DNA repair"/>
    <property type="evidence" value="ECO:0007669"/>
    <property type="project" value="UniProtKB-KW"/>
</dbReference>
<dbReference type="GO" id="GO:0140861">
    <property type="term" value="P:DNA repair-dependent chromatin remodeling"/>
    <property type="evidence" value="ECO:0000314"/>
    <property type="project" value="UniProtKB"/>
</dbReference>
<dbReference type="GO" id="GO:0007129">
    <property type="term" value="P:homologous chromosome pairing at meiosis"/>
    <property type="evidence" value="ECO:0000250"/>
    <property type="project" value="UniProtKB"/>
</dbReference>
<dbReference type="GO" id="GO:0051898">
    <property type="term" value="P:negative regulation of phosphatidylinositol 3-kinase/protein kinase B signal transduction"/>
    <property type="evidence" value="ECO:0000314"/>
    <property type="project" value="UniProt"/>
</dbReference>
<dbReference type="GO" id="GO:0031397">
    <property type="term" value="P:negative regulation of protein ubiquitination"/>
    <property type="evidence" value="ECO:0000314"/>
    <property type="project" value="UniProtKB"/>
</dbReference>
<dbReference type="GO" id="GO:0000122">
    <property type="term" value="P:negative regulation of transcription by RNA polymerase II"/>
    <property type="evidence" value="ECO:0000314"/>
    <property type="project" value="UniProtKB"/>
</dbReference>
<dbReference type="GO" id="GO:0001649">
    <property type="term" value="P:osteoblast differentiation"/>
    <property type="evidence" value="ECO:0000250"/>
    <property type="project" value="UniProtKB"/>
</dbReference>
<dbReference type="GO" id="GO:0045722">
    <property type="term" value="P:positive regulation of gluconeogenesis"/>
    <property type="evidence" value="ECO:0000315"/>
    <property type="project" value="UniProtKB"/>
</dbReference>
<dbReference type="GO" id="GO:2000234">
    <property type="term" value="P:positive regulation of rRNA processing"/>
    <property type="evidence" value="ECO:0000314"/>
    <property type="project" value="UniProtKB"/>
</dbReference>
<dbReference type="GO" id="GO:0045943">
    <property type="term" value="P:positive regulation of transcription by RNA polymerase I"/>
    <property type="evidence" value="ECO:0000314"/>
    <property type="project" value="UniProtKB"/>
</dbReference>
<dbReference type="GO" id="GO:0006476">
    <property type="term" value="P:protein deacetylation"/>
    <property type="evidence" value="ECO:0000314"/>
    <property type="project" value="UniProtKB"/>
</dbReference>
<dbReference type="GO" id="GO:0061698">
    <property type="term" value="P:protein deglutarylation"/>
    <property type="evidence" value="ECO:0000314"/>
    <property type="project" value="UniProtKB"/>
</dbReference>
<dbReference type="GO" id="GO:0106230">
    <property type="term" value="P:protein depropionylation"/>
    <property type="evidence" value="ECO:0000250"/>
    <property type="project" value="UniProtKB"/>
</dbReference>
<dbReference type="GO" id="GO:0062176">
    <property type="term" value="P:R-loop processing"/>
    <property type="evidence" value="ECO:0000314"/>
    <property type="project" value="UniProtKB"/>
</dbReference>
<dbReference type="GO" id="GO:0006282">
    <property type="term" value="P:regulation of DNA repair"/>
    <property type="evidence" value="ECO:0000314"/>
    <property type="project" value="UniProtKB"/>
</dbReference>
<dbReference type="GO" id="GO:0010821">
    <property type="term" value="P:regulation of mitochondrion organization"/>
    <property type="evidence" value="ECO:0000315"/>
    <property type="project" value="UniProtKB"/>
</dbReference>
<dbReference type="GO" id="GO:0046825">
    <property type="term" value="P:regulation of protein export from nucleus"/>
    <property type="evidence" value="ECO:0000250"/>
    <property type="project" value="UniProtKB"/>
</dbReference>
<dbReference type="GO" id="GO:0006357">
    <property type="term" value="P:regulation of transcription by RNA polymerase II"/>
    <property type="evidence" value="ECO:0000314"/>
    <property type="project" value="UniProtKB"/>
</dbReference>
<dbReference type="GO" id="GO:1901836">
    <property type="term" value="P:regulation of transcription of nucleolar large rRNA by RNA polymerase I"/>
    <property type="evidence" value="ECO:0000314"/>
    <property type="project" value="UniProtKB"/>
</dbReference>
<dbReference type="GO" id="GO:0009303">
    <property type="term" value="P:rRNA transcription"/>
    <property type="evidence" value="ECO:0000315"/>
    <property type="project" value="UniProtKB"/>
</dbReference>
<dbReference type="GO" id="GO:0045815">
    <property type="term" value="P:transcription initiation-coupled chromatin remodeling"/>
    <property type="evidence" value="ECO:0000314"/>
    <property type="project" value="UniProtKB"/>
</dbReference>
<dbReference type="GO" id="GO:0010526">
    <property type="term" value="P:transposable element silencing"/>
    <property type="evidence" value="ECO:0000250"/>
    <property type="project" value="UniProtKB"/>
</dbReference>
<dbReference type="CDD" id="cd01410">
    <property type="entry name" value="SIRT7"/>
    <property type="match status" value="1"/>
</dbReference>
<dbReference type="FunFam" id="2.20.28.200:FF:000002">
    <property type="entry name" value="NAD-dependent deacetylase sirtuin-7"/>
    <property type="match status" value="1"/>
</dbReference>
<dbReference type="FunFam" id="3.40.50.1220:FF:000038">
    <property type="entry name" value="NAD-dependent protein deacetylase sirtuin-6 isoform X2"/>
    <property type="match status" value="1"/>
</dbReference>
<dbReference type="Gene3D" id="2.20.28.200">
    <property type="match status" value="1"/>
</dbReference>
<dbReference type="Gene3D" id="3.40.50.1220">
    <property type="entry name" value="TPP-binding domain"/>
    <property type="match status" value="1"/>
</dbReference>
<dbReference type="InterPro" id="IPR029035">
    <property type="entry name" value="DHS-like_NAD/FAD-binding_dom"/>
</dbReference>
<dbReference type="InterPro" id="IPR050134">
    <property type="entry name" value="NAD-dep_sirtuin_deacylases"/>
</dbReference>
<dbReference type="InterPro" id="IPR003000">
    <property type="entry name" value="Sirtuin"/>
</dbReference>
<dbReference type="InterPro" id="IPR026590">
    <property type="entry name" value="Ssirtuin_cat_dom"/>
</dbReference>
<dbReference type="PANTHER" id="PTHR11085:SF1">
    <property type="entry name" value="NAD-DEPENDENT PROTEIN DEACETYLASE SIRTUIN-7"/>
    <property type="match status" value="1"/>
</dbReference>
<dbReference type="PANTHER" id="PTHR11085">
    <property type="entry name" value="NAD-DEPENDENT PROTEIN DEACYLASE SIRTUIN-5, MITOCHONDRIAL-RELATED"/>
    <property type="match status" value="1"/>
</dbReference>
<dbReference type="Pfam" id="PF02146">
    <property type="entry name" value="SIR2"/>
    <property type="match status" value="1"/>
</dbReference>
<dbReference type="SUPFAM" id="SSF52467">
    <property type="entry name" value="DHS-like NAD/FAD-binding domain"/>
    <property type="match status" value="1"/>
</dbReference>
<dbReference type="PROSITE" id="PS50305">
    <property type="entry name" value="SIRTUIN"/>
    <property type="match status" value="1"/>
</dbReference>
<feature type="chain" id="PRO_0000110271" description="NAD-dependent protein deacetylase sirtuin-7">
    <location>
        <begin position="1"/>
        <end position="400"/>
    </location>
</feature>
<feature type="domain" description="Deacetylase sirtuin-type" evidence="3">
    <location>
        <begin position="82"/>
        <end position="329"/>
    </location>
</feature>
<feature type="region of interest" description="Disordered" evidence="4">
    <location>
        <begin position="1"/>
        <end position="27"/>
    </location>
</feature>
<feature type="region of interest" description="Disordered" evidence="4">
    <location>
        <begin position="354"/>
        <end position="380"/>
    </location>
</feature>
<feature type="compositionally biased region" description="Basic and acidic residues" evidence="4">
    <location>
        <begin position="8"/>
        <end position="27"/>
    </location>
</feature>
<feature type="active site" description="Proton acceptor" evidence="3 7 10 12 25">
    <location>
        <position position="187"/>
    </location>
</feature>
<feature type="binding site" evidence="2">
    <location>
        <begin position="107"/>
        <end position="126"/>
    </location>
    <ligand>
        <name>NAD(+)</name>
        <dbReference type="ChEBI" id="CHEBI:57540"/>
    </ligand>
</feature>
<feature type="binding site" evidence="2">
    <location>
        <begin position="167"/>
        <end position="170"/>
    </location>
    <ligand>
        <name>NAD(+)</name>
        <dbReference type="ChEBI" id="CHEBI:57540"/>
    </ligand>
</feature>
<feature type="binding site" evidence="3">
    <location>
        <position position="195"/>
    </location>
    <ligand>
        <name>Zn(2+)</name>
        <dbReference type="ChEBI" id="CHEBI:29105"/>
    </ligand>
</feature>
<feature type="binding site" evidence="3">
    <location>
        <position position="198"/>
    </location>
    <ligand>
        <name>Zn(2+)</name>
        <dbReference type="ChEBI" id="CHEBI:29105"/>
    </ligand>
</feature>
<feature type="binding site" evidence="3">
    <location>
        <position position="225"/>
    </location>
    <ligand>
        <name>Zn(2+)</name>
        <dbReference type="ChEBI" id="CHEBI:29105"/>
    </ligand>
</feature>
<feature type="binding site" evidence="3">
    <location>
        <position position="228"/>
    </location>
    <ligand>
        <name>Zn(2+)</name>
        <dbReference type="ChEBI" id="CHEBI:29105"/>
    </ligand>
</feature>
<feature type="binding site" evidence="2">
    <location>
        <begin position="268"/>
        <end position="270"/>
    </location>
    <ligand>
        <name>NAD(+)</name>
        <dbReference type="ChEBI" id="CHEBI:57540"/>
    </ligand>
</feature>
<feature type="binding site" evidence="2">
    <location>
        <begin position="297"/>
        <end position="299"/>
    </location>
    <ligand>
        <name>NAD(+)</name>
        <dbReference type="ChEBI" id="CHEBI:57540"/>
    </ligand>
</feature>
<feature type="binding site" evidence="2">
    <location>
        <position position="315"/>
    </location>
    <ligand>
        <name>NAD(+)</name>
        <dbReference type="ChEBI" id="CHEBI:57540"/>
    </ligand>
</feature>
<feature type="modified residue" description="Asymmetric dimethylarginine; alternate" evidence="22">
    <location>
        <position position="388"/>
    </location>
</feature>
<feature type="modified residue" description="Omega-N-methylarginine; alternate" evidence="22 42">
    <location>
        <position position="388"/>
    </location>
</feature>
<feature type="splice variant" id="VSP_044396" description="In isoform 3." evidence="34">
    <original>MAAGGLSRSERKAAERVRRLREEQQRERLR</original>
    <variation>MPGPRRRSPSACP</variation>
    <location>
        <begin position="1"/>
        <end position="30"/>
    </location>
</feature>
<feature type="splice variant" id="VSP_008736" description="In isoform 2." evidence="34">
    <original>QHVVSQNCDGLHLRSGLPRTAI</original>
    <variation>RALGGWYTCQGPGRAPWCPVGN</variation>
    <location>
        <begin position="162"/>
        <end position="183"/>
    </location>
</feature>
<feature type="splice variant" id="VSP_008737" description="In isoform 2." evidence="34">
    <location>
        <begin position="184"/>
        <end position="400"/>
    </location>
</feature>
<feature type="splice variant" id="VSP_044397" description="In isoform 3." evidence="34">
    <original>WQDPIFSLATPLRAGEEGSHSRKSLCRSREEAPPGDRGAPLSSAPILGGWFGRGCTKRTKRKKVT</original>
    <variation>VL</variation>
    <location>
        <begin position="336"/>
        <end position="400"/>
    </location>
</feature>
<feature type="mutagenesis site" description="Catalytically inactive mutant; abolishes activation of pre-rRNA synthesis. Abolishes deacetylation of DDB1. Abolished histone desuccinylase activity; when associated with Y-187." evidence="7 9 14 20">
    <original>S</original>
    <variation>A</variation>
    <location>
        <position position="111"/>
    </location>
</feature>
<feature type="mutagenesis site" description="Abolishes deacylase and deacetylase activities and activation of pre-rRNA synthesis. Abolished histone desuccinylase activity; when associated with A-111." evidence="7 10 12 14 25">
    <original>H</original>
    <variation>Y</variation>
    <location>
        <position position="187"/>
    </location>
</feature>
<feature type="mutagenesis site" description="Mimics methylation status; impaired histone deacetylase activity." evidence="22">
    <original>R</original>
    <variation>F</variation>
    <location>
        <position position="388"/>
    </location>
</feature>
<feature type="mutagenesis site" description="Decreased methylation; does not affect histone deacetylase activity." evidence="22">
    <original>R</original>
    <variation>K</variation>
    <location>
        <position position="388"/>
    </location>
</feature>
<feature type="sequence conflict" description="In Ref. 2; BAG52860." evidence="36" ref="2">
    <original>L</original>
    <variation>Q</variation>
    <location>
        <position position="71"/>
    </location>
</feature>
<feature type="sequence conflict" description="In Ref. 2; BAF82954." evidence="36" ref="2">
    <original>G</original>
    <variation>S</variation>
    <location>
        <position position="384"/>
    </location>
</feature>
<feature type="helix" evidence="43">
    <location>
        <begin position="8"/>
        <end position="37"/>
    </location>
</feature>
<feature type="helix" evidence="43">
    <location>
        <begin position="40"/>
        <end position="42"/>
    </location>
</feature>
<feature type="helix" evidence="43">
    <location>
        <begin position="45"/>
        <end position="52"/>
    </location>
</feature>
<feature type="helix" evidence="43">
    <location>
        <begin position="55"/>
        <end position="60"/>
    </location>
</feature>
<evidence type="ECO:0000250" key="1">
    <source>
        <dbReference type="UniProtKB" id="Q8BKJ9"/>
    </source>
</evidence>
<evidence type="ECO:0000250" key="2">
    <source>
        <dbReference type="UniProtKB" id="Q9NXA8"/>
    </source>
</evidence>
<evidence type="ECO:0000255" key="3">
    <source>
        <dbReference type="PROSITE-ProRule" id="PRU00236"/>
    </source>
</evidence>
<evidence type="ECO:0000256" key="4">
    <source>
        <dbReference type="SAM" id="MobiDB-lite"/>
    </source>
</evidence>
<evidence type="ECO:0000269" key="5">
    <source>
    </source>
</evidence>
<evidence type="ECO:0000269" key="6">
    <source>
    </source>
</evidence>
<evidence type="ECO:0000269" key="7">
    <source>
    </source>
</evidence>
<evidence type="ECO:0000269" key="8">
    <source>
    </source>
</evidence>
<evidence type="ECO:0000269" key="9">
    <source>
    </source>
</evidence>
<evidence type="ECO:0000269" key="10">
    <source>
    </source>
</evidence>
<evidence type="ECO:0000269" key="11">
    <source>
    </source>
</evidence>
<evidence type="ECO:0000269" key="12">
    <source>
    </source>
</evidence>
<evidence type="ECO:0000269" key="13">
    <source>
    </source>
</evidence>
<evidence type="ECO:0000269" key="14">
    <source>
    </source>
</evidence>
<evidence type="ECO:0000269" key="15">
    <source>
    </source>
</evidence>
<evidence type="ECO:0000269" key="16">
    <source>
    </source>
</evidence>
<evidence type="ECO:0000269" key="17">
    <source>
    </source>
</evidence>
<evidence type="ECO:0000269" key="18">
    <source>
    </source>
</evidence>
<evidence type="ECO:0000269" key="19">
    <source>
    </source>
</evidence>
<evidence type="ECO:0000269" key="20">
    <source>
    </source>
</evidence>
<evidence type="ECO:0000269" key="21">
    <source>
    </source>
</evidence>
<evidence type="ECO:0000269" key="22">
    <source>
    </source>
</evidence>
<evidence type="ECO:0000269" key="23">
    <source>
    </source>
</evidence>
<evidence type="ECO:0000269" key="24">
    <source>
    </source>
</evidence>
<evidence type="ECO:0000269" key="25">
    <source>
    </source>
</evidence>
<evidence type="ECO:0000269" key="26">
    <source>
    </source>
</evidence>
<evidence type="ECO:0000269" key="27">
    <source>
    </source>
</evidence>
<evidence type="ECO:0000269" key="28">
    <source>
    </source>
</evidence>
<evidence type="ECO:0000269" key="29">
    <source>
    </source>
</evidence>
<evidence type="ECO:0000269" key="30">
    <source>
    </source>
</evidence>
<evidence type="ECO:0000303" key="31">
    <source>
    </source>
</evidence>
<evidence type="ECO:0000303" key="32">
    <source>
    </source>
</evidence>
<evidence type="ECO:0000303" key="33">
    <source>
    </source>
</evidence>
<evidence type="ECO:0000303" key="34">
    <source>
    </source>
</evidence>
<evidence type="ECO:0000303" key="35">
    <source>
    </source>
</evidence>
<evidence type="ECO:0000305" key="36"/>
<evidence type="ECO:0000305" key="37">
    <source>
    </source>
</evidence>
<evidence type="ECO:0000305" key="38">
    <source>
    </source>
</evidence>
<evidence type="ECO:0000305" key="39">
    <source>
    </source>
</evidence>
<evidence type="ECO:0000312" key="40">
    <source>
        <dbReference type="HGNC" id="HGNC:14935"/>
    </source>
</evidence>
<evidence type="ECO:0007744" key="41">
    <source>
        <dbReference type="PDB" id="5IQZ"/>
    </source>
</evidence>
<evidence type="ECO:0007744" key="42">
    <source>
    </source>
</evidence>
<evidence type="ECO:0007829" key="43">
    <source>
        <dbReference type="PDB" id="5IQZ"/>
    </source>
</evidence>
<protein>
    <recommendedName>
        <fullName>NAD-dependent protein deacetylase sirtuin-7</fullName>
        <ecNumber evidence="3 11 12 17 20 23 26">2.3.1.286</ecNumber>
    </recommendedName>
    <alternativeName>
        <fullName>NAD-dependent protein deacylase sirtuin-7</fullName>
        <ecNumber evidence="14 28">2.3.1.-</ecNumber>
    </alternativeName>
    <alternativeName>
        <fullName>Regulatory protein SIR2 homolog 7</fullName>
    </alternativeName>
    <alternativeName>
        <fullName>SIR2-like protein 7</fullName>
    </alternativeName>
</protein>
<accession>Q9NRC8</accession>
<accession>A8K2K0</accession>
<accession>B3KSU8</accession>
<accession>Q3MIK4</accession>
<accession>Q9NSZ6</accession>
<accession>Q9NUS6</accession>